<name>CIAO1_DROWI</name>
<evidence type="ECO:0000255" key="1">
    <source>
        <dbReference type="HAMAP-Rule" id="MF_03037"/>
    </source>
</evidence>
<sequence length="335" mass="37105">MGRLILEHTLQGHKGRIWGVAWHPKGNTFASCGEDKAIRIWSLSGNSWSTKTILSDGHKRTIREIRWSPCGQYLASASFDATTAIWSKSSGEFECNATLEGHENEVKSVSWSKSGGLLATCSRDKSVWIWEVAGDDEFECAAVLNPHTQDVKRVVWHPTKEILASASYDNTIKMFAESALDSDWDCTATLSSHTSTVWSIDFDADGERLVSCSDDTTLKIWRAYHPGNDAGVATPDKQTVWKCVCTLSGQHSRAIYDVSWCKLTGLIATACGDDGIRIFKESSDSKRDEPTFEQVTAEESAHEQDVNSVEWNPVMAGQLISCSDDGTIKIWKMLD</sequence>
<dbReference type="EMBL" id="CH963894">
    <property type="protein sequence ID" value="EDW77066.1"/>
    <property type="molecule type" value="Genomic_DNA"/>
</dbReference>
<dbReference type="SMR" id="B4MY77"/>
<dbReference type="STRING" id="7260.B4MY77"/>
<dbReference type="EnsemblMetazoa" id="FBtr0252775">
    <property type="protein sequence ID" value="FBpp0251267"/>
    <property type="gene ID" value="FBgn0224109"/>
</dbReference>
<dbReference type="EnsemblMetazoa" id="XM_002066044.4">
    <property type="protein sequence ID" value="XP_002066080.1"/>
    <property type="gene ID" value="LOC6643305"/>
</dbReference>
<dbReference type="GeneID" id="6643305"/>
<dbReference type="KEGG" id="dwi:6643305"/>
<dbReference type="CTD" id="9391"/>
<dbReference type="eggNOG" id="KOG0645">
    <property type="taxonomic scope" value="Eukaryota"/>
</dbReference>
<dbReference type="HOGENOM" id="CLU_000288_57_8_1"/>
<dbReference type="OMA" id="IREIRWS"/>
<dbReference type="OrthoDB" id="284782at2759"/>
<dbReference type="PhylomeDB" id="B4MY77"/>
<dbReference type="Proteomes" id="UP000007798">
    <property type="component" value="Unassembled WGS sequence"/>
</dbReference>
<dbReference type="GO" id="GO:0097361">
    <property type="term" value="C:cytosolic [4Fe-4S] assembly targeting complex"/>
    <property type="evidence" value="ECO:0007669"/>
    <property type="project" value="EnsemblMetazoa"/>
</dbReference>
<dbReference type="GO" id="GO:1902695">
    <property type="term" value="C:metallochaperone complex"/>
    <property type="evidence" value="ECO:0007669"/>
    <property type="project" value="EnsemblMetazoa"/>
</dbReference>
<dbReference type="GO" id="GO:0016226">
    <property type="term" value="P:iron-sulfur cluster assembly"/>
    <property type="evidence" value="ECO:0007669"/>
    <property type="project" value="UniProtKB-UniRule"/>
</dbReference>
<dbReference type="GO" id="GO:0051604">
    <property type="term" value="P:protein maturation"/>
    <property type="evidence" value="ECO:0000250"/>
    <property type="project" value="UniProtKB"/>
</dbReference>
<dbReference type="CDD" id="cd00200">
    <property type="entry name" value="WD40"/>
    <property type="match status" value="1"/>
</dbReference>
<dbReference type="FunFam" id="2.130.10.10:FF:000136">
    <property type="entry name" value="Probable cytosolic iron-sulfur protein assembly protein CIAO1"/>
    <property type="match status" value="1"/>
</dbReference>
<dbReference type="Gene3D" id="2.130.10.10">
    <property type="entry name" value="YVTN repeat-like/Quinoprotein amine dehydrogenase"/>
    <property type="match status" value="1"/>
</dbReference>
<dbReference type="HAMAP" id="MF_03037">
    <property type="entry name" value="ciao1"/>
    <property type="match status" value="1"/>
</dbReference>
<dbReference type="InterPro" id="IPR028608">
    <property type="entry name" value="CIAO1/Cia1"/>
</dbReference>
<dbReference type="InterPro" id="IPR020472">
    <property type="entry name" value="G-protein_beta_WD-40_rep"/>
</dbReference>
<dbReference type="InterPro" id="IPR015943">
    <property type="entry name" value="WD40/YVTN_repeat-like_dom_sf"/>
</dbReference>
<dbReference type="InterPro" id="IPR019775">
    <property type="entry name" value="WD40_repeat_CS"/>
</dbReference>
<dbReference type="InterPro" id="IPR036322">
    <property type="entry name" value="WD40_repeat_dom_sf"/>
</dbReference>
<dbReference type="InterPro" id="IPR001680">
    <property type="entry name" value="WD40_rpt"/>
</dbReference>
<dbReference type="PANTHER" id="PTHR19920:SF0">
    <property type="entry name" value="CYTOSOLIC IRON-SULFUR PROTEIN ASSEMBLY PROTEIN CIAO1-RELATED"/>
    <property type="match status" value="1"/>
</dbReference>
<dbReference type="PANTHER" id="PTHR19920">
    <property type="entry name" value="WD40 PROTEIN CIAO1"/>
    <property type="match status" value="1"/>
</dbReference>
<dbReference type="Pfam" id="PF00400">
    <property type="entry name" value="WD40"/>
    <property type="match status" value="7"/>
</dbReference>
<dbReference type="PRINTS" id="PR00320">
    <property type="entry name" value="GPROTEINBRPT"/>
</dbReference>
<dbReference type="SMART" id="SM00320">
    <property type="entry name" value="WD40"/>
    <property type="match status" value="7"/>
</dbReference>
<dbReference type="SUPFAM" id="SSF50978">
    <property type="entry name" value="WD40 repeat-like"/>
    <property type="match status" value="1"/>
</dbReference>
<dbReference type="PROSITE" id="PS00678">
    <property type="entry name" value="WD_REPEATS_1"/>
    <property type="match status" value="1"/>
</dbReference>
<dbReference type="PROSITE" id="PS50082">
    <property type="entry name" value="WD_REPEATS_2"/>
    <property type="match status" value="6"/>
</dbReference>
<dbReference type="PROSITE" id="PS50294">
    <property type="entry name" value="WD_REPEATS_REGION"/>
    <property type="match status" value="1"/>
</dbReference>
<accession>B4MY77</accession>
<protein>
    <recommendedName>
        <fullName evidence="1">Probable cytosolic iron-sulfur protein assembly protein Ciao1</fullName>
    </recommendedName>
</protein>
<feature type="chain" id="PRO_0000382493" description="Probable cytosolic iron-sulfur protein assembly protein Ciao1">
    <location>
        <begin position="1"/>
        <end position="335"/>
    </location>
</feature>
<feature type="repeat" description="WD 1">
    <location>
        <begin position="12"/>
        <end position="51"/>
    </location>
</feature>
<feature type="repeat" description="WD 2">
    <location>
        <begin position="57"/>
        <end position="96"/>
    </location>
</feature>
<feature type="repeat" description="WD 3">
    <location>
        <begin position="101"/>
        <end position="140"/>
    </location>
</feature>
<feature type="repeat" description="WD 4">
    <location>
        <begin position="146"/>
        <end position="185"/>
    </location>
</feature>
<feature type="repeat" description="WD 5">
    <location>
        <begin position="192"/>
        <end position="231"/>
    </location>
</feature>
<feature type="repeat" description="WD 6">
    <location>
        <begin position="250"/>
        <end position="289"/>
    </location>
</feature>
<feature type="repeat" description="WD 7">
    <location>
        <begin position="301"/>
        <end position="335"/>
    </location>
</feature>
<organism>
    <name type="scientific">Drosophila willistoni</name>
    <name type="common">Fruit fly</name>
    <dbReference type="NCBI Taxonomy" id="7260"/>
    <lineage>
        <taxon>Eukaryota</taxon>
        <taxon>Metazoa</taxon>
        <taxon>Ecdysozoa</taxon>
        <taxon>Arthropoda</taxon>
        <taxon>Hexapoda</taxon>
        <taxon>Insecta</taxon>
        <taxon>Pterygota</taxon>
        <taxon>Neoptera</taxon>
        <taxon>Endopterygota</taxon>
        <taxon>Diptera</taxon>
        <taxon>Brachycera</taxon>
        <taxon>Muscomorpha</taxon>
        <taxon>Ephydroidea</taxon>
        <taxon>Drosophilidae</taxon>
        <taxon>Drosophila</taxon>
        <taxon>Sophophora</taxon>
    </lineage>
</organism>
<reference key="1">
    <citation type="journal article" date="2007" name="Nature">
        <title>Evolution of genes and genomes on the Drosophila phylogeny.</title>
        <authorList>
            <consortium name="Drosophila 12 genomes consortium"/>
        </authorList>
    </citation>
    <scope>NUCLEOTIDE SEQUENCE [LARGE SCALE GENOMIC DNA]</scope>
    <source>
        <strain>Tucson 14030-0811.24</strain>
    </source>
</reference>
<proteinExistence type="inferred from homology"/>
<gene>
    <name evidence="1" type="primary">Ciao1</name>
    <name type="ORF">GK22124</name>
</gene>
<comment type="function">
    <text evidence="1">Essential component of the cytosolic iron-sulfur (Fe/S) protein assembly machinery. Required for the maturation of extramitochondrial Fe/S proteins.</text>
</comment>
<comment type="similarity">
    <text evidence="1">Belongs to the WD repeat CIA1 family.</text>
</comment>
<keyword id="KW-1185">Reference proteome</keyword>
<keyword id="KW-0677">Repeat</keyword>
<keyword id="KW-0853">WD repeat</keyword>